<evidence type="ECO:0000255" key="1">
    <source>
        <dbReference type="HAMAP-Rule" id="MF_04091"/>
    </source>
</evidence>
<organism>
    <name type="scientific">Rotavirus A (isolate RVA/Cow/United States/B223/1983/G10P8[11])</name>
    <name type="common">RV-A</name>
    <dbReference type="NCBI Taxonomy" id="1835656"/>
    <lineage>
        <taxon>Viruses</taxon>
        <taxon>Riboviria</taxon>
        <taxon>Orthornavirae</taxon>
        <taxon>Duplornaviricota</taxon>
        <taxon>Resentoviricetes</taxon>
        <taxon>Reovirales</taxon>
        <taxon>Sedoreoviridae</taxon>
        <taxon>Rotavirus</taxon>
        <taxon>Rotavirus A</taxon>
    </lineage>
</organism>
<comment type="function">
    <text evidence="1">Plays an essential role in the virus replication cycle by acting as a viroporin. Creates a pore in the host endoplasmic reticulum and as a consequence releases Ca(2+) in the cytoplasm of infected cell. In turn, high levels of cytoplasmic calcium trigger membrane trafficking and transport of viral ER-associated proteins to viroplasms, sites of viral genome replication and immature particle assembly.</text>
</comment>
<comment type="function">
    <text evidence="1">The secreted form acts as an enterotoxin that causes phospholipase C-dependent elevation of the intracellular calcium concentration in host intestinal mucosa cells. Increased concentration of intracellular calcium disrupts the cytoskeleton and the tight junctions, raising the paracellular permeability. Potentiates chloride ion secretion through a calcium ion-dependent signaling pathway, inducing age-dependent diarrhea. To perform this enterotoxigenic role in vivo, NSP4 is released from infected enterocytes in a soluble form capable of diffusing within the intestinal lumen and interacting with host plasma membrane receptors on neighboring epithelial cells such as integrins ITGA1/ITGB1 and ITGA2/ITGB1.</text>
</comment>
<comment type="subunit">
    <text evidence="1">Homotetramer. Interacts with the immature particle in the viroplasm. Interacts with host CAV1, early and late in infection. Interacts with host integrin ITGA1/ITGB1 heterodimer. Interacts with host integrin ITGA2/ITGB1 heterodimer. Interaction with microtubules blocks trafficking to the Golgi apparatus.</text>
</comment>
<comment type="subcellular location">
    <subcellularLocation>
        <location evidence="1">Host rough endoplasmic reticulum membrane</location>
        <topology evidence="1">Single-pass type III membrane protein</topology>
    </subcellularLocation>
    <subcellularLocation>
        <location evidence="1">Host membrane</location>
        <location evidence="1">Host caveola</location>
        <topology evidence="1">Single-pass type III membrane protein</topology>
    </subcellularLocation>
    <subcellularLocation>
        <location evidence="1">Secreted</location>
    </subcellularLocation>
    <text evidence="1">NSP4 also localizes in vesicular structures which contain autophagosomal markers and associate with viroplasms in virus-infected cells. Additionally, a soluble form of glycosylated NSP4 is secreted despite retention of its transmembrane domain.</text>
</comment>
<comment type="domain">
    <text evidence="1">Binds 1 calcium ion per tetramer.</text>
</comment>
<comment type="PTM">
    <text evidence="1">The N-glycosyl content is primarily Man(9)GlcNAc, with a small amount of Man(8)GlcNAc.</text>
</comment>
<comment type="similarity">
    <text evidence="1">Belongs to the rotavirus NSP4 family.</text>
</comment>
<name>NSP4_ROTBB</name>
<organismHost>
    <name type="scientific">Bos taurus</name>
    <name type="common">Bovine</name>
    <dbReference type="NCBI Taxonomy" id="9913"/>
</organismHost>
<protein>
    <recommendedName>
        <fullName evidence="1">Non-structural glycoprotein 4</fullName>
        <shortName evidence="1">NSP4</shortName>
    </recommendedName>
    <alternativeName>
        <fullName evidence="1">NCVP5</fullName>
    </alternativeName>
    <alternativeName>
        <fullName evidence="1">NS28</fullName>
    </alternativeName>
</protein>
<feature type="chain" id="PRO_0000369462" description="Non-structural glycoprotein 4">
    <location>
        <begin position="1"/>
        <end position="175"/>
    </location>
</feature>
<feature type="topological domain" description="Lumenal" evidence="1">
    <location>
        <begin position="1"/>
        <end position="28"/>
    </location>
</feature>
<feature type="transmembrane region" description="Helical; Signal-anchor for type III membrane protein" evidence="1">
    <location>
        <begin position="29"/>
        <end position="51"/>
    </location>
</feature>
<feature type="topological domain" description="Cytoplasmic" evidence="1">
    <location>
        <begin position="52"/>
        <end position="175"/>
    </location>
</feature>
<feature type="binding site" evidence="1">
    <location>
        <position position="120"/>
    </location>
    <ligand>
        <name>Ca(2+)</name>
        <dbReference type="ChEBI" id="CHEBI:29108"/>
    </ligand>
</feature>
<feature type="binding site" evidence="1">
    <location>
        <position position="123"/>
    </location>
    <ligand>
        <name>Ca(2+)</name>
        <dbReference type="ChEBI" id="CHEBI:29108"/>
    </ligand>
</feature>
<feature type="glycosylation site" description="N-linked (GlcNAc...) asparagine; by host" evidence="1">
    <location>
        <position position="8"/>
    </location>
</feature>
<feature type="glycosylation site" description="N-linked (GlcNAc...) asparagine; by host" evidence="1">
    <location>
        <position position="18"/>
    </location>
</feature>
<keyword id="KW-1072">Activation of host autophagy by virus</keyword>
<keyword id="KW-0106">Calcium</keyword>
<keyword id="KW-0260">Enterotoxin</keyword>
<keyword id="KW-0325">Glycoprotein</keyword>
<keyword id="KW-1038">Host endoplasmic reticulum</keyword>
<keyword id="KW-1043">Host membrane</keyword>
<keyword id="KW-0945">Host-virus interaction</keyword>
<keyword id="KW-0407">Ion channel</keyword>
<keyword id="KW-0406">Ion transport</keyword>
<keyword id="KW-0472">Membrane</keyword>
<keyword id="KW-0479">Metal-binding</keyword>
<keyword id="KW-0964">Secreted</keyword>
<keyword id="KW-0735">Signal-anchor</keyword>
<keyword id="KW-0800">Toxin</keyword>
<keyword id="KW-0812">Transmembrane</keyword>
<keyword id="KW-1133">Transmembrane helix</keyword>
<keyword id="KW-0813">Transport</keyword>
<keyword id="KW-1182">Viral ion channel</keyword>
<keyword id="KW-0843">Virulence</keyword>
<dbReference type="EMBL" id="AF144805">
    <property type="protein sequence ID" value="AAD50680.1"/>
    <property type="molecule type" value="Genomic_RNA"/>
</dbReference>
<dbReference type="SMR" id="Q9PYC8"/>
<dbReference type="GO" id="GO:0005576">
    <property type="term" value="C:extracellular region"/>
    <property type="evidence" value="ECO:0007669"/>
    <property type="project" value="UniProtKB-SubCell"/>
</dbReference>
<dbReference type="GO" id="GO:0044155">
    <property type="term" value="C:host caveola"/>
    <property type="evidence" value="ECO:0007669"/>
    <property type="project" value="UniProtKB-SubCell"/>
</dbReference>
<dbReference type="GO" id="GO:0044169">
    <property type="term" value="C:host cell rough endoplasmic reticulum membrane"/>
    <property type="evidence" value="ECO:0007669"/>
    <property type="project" value="UniProtKB-SubCell"/>
</dbReference>
<dbReference type="GO" id="GO:0016020">
    <property type="term" value="C:membrane"/>
    <property type="evidence" value="ECO:0007669"/>
    <property type="project" value="UniProtKB-UniRule"/>
</dbReference>
<dbReference type="GO" id="GO:0015267">
    <property type="term" value="F:channel activity"/>
    <property type="evidence" value="ECO:0007669"/>
    <property type="project" value="UniProtKB-KW"/>
</dbReference>
<dbReference type="GO" id="GO:0046872">
    <property type="term" value="F:metal ion binding"/>
    <property type="evidence" value="ECO:0007669"/>
    <property type="project" value="UniProtKB-UniRule"/>
</dbReference>
<dbReference type="GO" id="GO:0090729">
    <property type="term" value="F:toxin activity"/>
    <property type="evidence" value="ECO:0007669"/>
    <property type="project" value="UniProtKB-UniRule"/>
</dbReference>
<dbReference type="GO" id="GO:0034220">
    <property type="term" value="P:monoatomic ion transmembrane transport"/>
    <property type="evidence" value="ECO:0007669"/>
    <property type="project" value="UniProtKB-KW"/>
</dbReference>
<dbReference type="GO" id="GO:0039520">
    <property type="term" value="P:symbiont-mediated activation of host autophagy"/>
    <property type="evidence" value="ECO:0007669"/>
    <property type="project" value="UniProtKB-KW"/>
</dbReference>
<dbReference type="GO" id="GO:0016032">
    <property type="term" value="P:viral process"/>
    <property type="evidence" value="ECO:0007669"/>
    <property type="project" value="UniProtKB-UniRule"/>
</dbReference>
<dbReference type="Gene3D" id="1.20.5.430">
    <property type="match status" value="1"/>
</dbReference>
<dbReference type="HAMAP" id="MF_04091">
    <property type="entry name" value="ROTA_NSP4"/>
    <property type="match status" value="1"/>
</dbReference>
<dbReference type="InterPro" id="IPR002107">
    <property type="entry name" value="Rotavirus_NSP4"/>
</dbReference>
<dbReference type="Pfam" id="PF01452">
    <property type="entry name" value="Rota_NSP4"/>
    <property type="match status" value="1"/>
</dbReference>
<dbReference type="SUPFAM" id="SSF58030">
    <property type="entry name" value="Rotavirus nonstructural proteins"/>
    <property type="match status" value="1"/>
</dbReference>
<proteinExistence type="inferred from homology"/>
<sequence length="175" mass="20446">MEKLTDLNYTLSVITLMNSTLHTILEDPGMAYFPYIASVLTVLFTLHKASIPTMKIALKTSKCSYKVVKYCIVTIFNTLLKLAGYKEQITTKDEIEKQMERVVKEMRRHFKMIDKLTTREIEQVGLLKRIHDKLDIRAVDEIDMTKEINQKNVRTLEEWEWGKNPYEPKEVTAAM</sequence>
<accession>Q9PYC8</accession>
<reference key="1">
    <citation type="journal article" date="2000" name="Arch. Virol.">
        <title>Species specificity and interspecies relatedness of NSP4 genetic groups by comparative NSP4 sequence analyses of animal rotaviruses.</title>
        <authorList>
            <person name="Ciarlet M."/>
            <person name="Liprandi F."/>
            <person name="Conner M.E."/>
            <person name="Estes M.K."/>
        </authorList>
    </citation>
    <scope>NUCLEOTIDE SEQUENCE [GENOMIC RNA]</scope>
</reference>